<protein>
    <recommendedName>
        <fullName>Uncharacterized protein AF_0970</fullName>
    </recommendedName>
</protein>
<organism>
    <name type="scientific">Archaeoglobus fulgidus (strain ATCC 49558 / DSM 4304 / JCM 9628 / NBRC 100126 / VC-16)</name>
    <dbReference type="NCBI Taxonomy" id="224325"/>
    <lineage>
        <taxon>Archaea</taxon>
        <taxon>Methanobacteriati</taxon>
        <taxon>Methanobacteriota</taxon>
        <taxon>Archaeoglobi</taxon>
        <taxon>Archaeoglobales</taxon>
        <taxon>Archaeoglobaceae</taxon>
        <taxon>Archaeoglobus</taxon>
    </lineage>
</organism>
<sequence length="86" mass="9730">MLDLSQTIEKVGEKMPWPPKVFWVGLVVYYGFVALCWIGEATAGINHIPTAAFWYASFLGTFLIPLFMSIIYFYFPEKAEEARGGS</sequence>
<reference key="1">
    <citation type="journal article" date="1997" name="Nature">
        <title>The complete genome sequence of the hyperthermophilic, sulphate-reducing archaeon Archaeoglobus fulgidus.</title>
        <authorList>
            <person name="Klenk H.-P."/>
            <person name="Clayton R.A."/>
            <person name="Tomb J.-F."/>
            <person name="White O."/>
            <person name="Nelson K.E."/>
            <person name="Ketchum K.A."/>
            <person name="Dodson R.J."/>
            <person name="Gwinn M.L."/>
            <person name="Hickey E.K."/>
            <person name="Peterson J.D."/>
            <person name="Richardson D.L."/>
            <person name="Kerlavage A.R."/>
            <person name="Graham D.E."/>
            <person name="Kyrpides N.C."/>
            <person name="Fleischmann R.D."/>
            <person name="Quackenbush J."/>
            <person name="Lee N.H."/>
            <person name="Sutton G.G."/>
            <person name="Gill S.R."/>
            <person name="Kirkness E.F."/>
            <person name="Dougherty B.A."/>
            <person name="McKenney K."/>
            <person name="Adams M.D."/>
            <person name="Loftus B.J."/>
            <person name="Peterson S.N."/>
            <person name="Reich C.I."/>
            <person name="McNeil L.K."/>
            <person name="Badger J.H."/>
            <person name="Glodek A."/>
            <person name="Zhou L."/>
            <person name="Overbeek R."/>
            <person name="Gocayne J.D."/>
            <person name="Weidman J.F."/>
            <person name="McDonald L.A."/>
            <person name="Utterback T.R."/>
            <person name="Cotton M.D."/>
            <person name="Spriggs T."/>
            <person name="Artiach P."/>
            <person name="Kaine B.P."/>
            <person name="Sykes S.M."/>
            <person name="Sadow P.W."/>
            <person name="D'Andrea K.P."/>
            <person name="Bowman C."/>
            <person name="Fujii C."/>
            <person name="Garland S.A."/>
            <person name="Mason T.M."/>
            <person name="Olsen G.J."/>
            <person name="Fraser C.M."/>
            <person name="Smith H.O."/>
            <person name="Woese C.R."/>
            <person name="Venter J.C."/>
        </authorList>
    </citation>
    <scope>NUCLEOTIDE SEQUENCE [LARGE SCALE GENOMIC DNA]</scope>
    <source>
        <strain>ATCC 49558 / DSM 4304 / JCM 9628 / NBRC 100126 / VC-16</strain>
    </source>
</reference>
<name>Y970_ARCFU</name>
<keyword id="KW-1003">Cell membrane</keyword>
<keyword id="KW-0472">Membrane</keyword>
<keyword id="KW-1185">Reference proteome</keyword>
<keyword id="KW-0812">Transmembrane</keyword>
<keyword id="KW-1133">Transmembrane helix</keyword>
<accession>O29292</accession>
<dbReference type="EMBL" id="AE000782">
    <property type="protein sequence ID" value="AAB90274.1"/>
    <property type="molecule type" value="Genomic_DNA"/>
</dbReference>
<dbReference type="PIR" id="B69371">
    <property type="entry name" value="B69371"/>
</dbReference>
<dbReference type="STRING" id="224325.AF_0970"/>
<dbReference type="PaxDb" id="224325-AF_0970"/>
<dbReference type="EnsemblBacteria" id="AAB90274">
    <property type="protein sequence ID" value="AAB90274"/>
    <property type="gene ID" value="AF_0970"/>
</dbReference>
<dbReference type="KEGG" id="afu:AF_0970"/>
<dbReference type="eggNOG" id="arCOG12198">
    <property type="taxonomic scope" value="Archaea"/>
</dbReference>
<dbReference type="HOGENOM" id="CLU_2645719_0_0_2"/>
<dbReference type="OrthoDB" id="51337at2157"/>
<dbReference type="Proteomes" id="UP000002199">
    <property type="component" value="Chromosome"/>
</dbReference>
<dbReference type="GO" id="GO:0005886">
    <property type="term" value="C:plasma membrane"/>
    <property type="evidence" value="ECO:0007669"/>
    <property type="project" value="UniProtKB-SubCell"/>
</dbReference>
<proteinExistence type="predicted"/>
<evidence type="ECO:0000255" key="1"/>
<evidence type="ECO:0000305" key="2"/>
<gene>
    <name type="ordered locus">AF_0970</name>
</gene>
<comment type="subcellular location">
    <subcellularLocation>
        <location evidence="2">Cell membrane</location>
        <topology evidence="2">Multi-pass membrane protein</topology>
    </subcellularLocation>
</comment>
<feature type="chain" id="PRO_0000127949" description="Uncharacterized protein AF_0970">
    <location>
        <begin position="1"/>
        <end position="86"/>
    </location>
</feature>
<feature type="transmembrane region" description="Helical" evidence="1">
    <location>
        <begin position="21"/>
        <end position="43"/>
    </location>
</feature>
<feature type="transmembrane region" description="Helical" evidence="1">
    <location>
        <begin position="53"/>
        <end position="75"/>
    </location>
</feature>